<feature type="signal peptide" evidence="2">
    <location>
        <begin position="1"/>
        <end position="23"/>
    </location>
</feature>
<feature type="chain" id="PRO_0000014550" description="T-lymphocyte activation antigen CD86">
    <location>
        <begin position="24"/>
        <end position="329"/>
    </location>
</feature>
<feature type="topological domain" description="Extracellular" evidence="2">
    <location>
        <begin position="24"/>
        <end position="247"/>
    </location>
</feature>
<feature type="transmembrane region" description="Helical" evidence="2">
    <location>
        <begin position="248"/>
        <end position="268"/>
    </location>
</feature>
<feature type="topological domain" description="Cytoplasmic" evidence="2">
    <location>
        <begin position="269"/>
        <end position="329"/>
    </location>
</feature>
<feature type="domain" description="Ig-like V-type">
    <location>
        <begin position="33"/>
        <end position="131"/>
    </location>
</feature>
<feature type="domain" description="Ig-like C2-type">
    <location>
        <begin position="150"/>
        <end position="225"/>
    </location>
</feature>
<feature type="region of interest" description="Disordered" evidence="4">
    <location>
        <begin position="277"/>
        <end position="329"/>
    </location>
</feature>
<feature type="compositionally biased region" description="Basic and acidic residues" evidence="4">
    <location>
        <begin position="287"/>
        <end position="312"/>
    </location>
</feature>
<feature type="glycosylation site" description="N-linked (GlcNAc...) asparagine" evidence="2">
    <location>
        <position position="33"/>
    </location>
</feature>
<feature type="glycosylation site" description="N-linked (GlcNAc...) asparagine" evidence="2">
    <location>
        <position position="47"/>
    </location>
</feature>
<feature type="glycosylation site" description="N-linked (GlcNAc...) asparagine" evidence="2">
    <location>
        <position position="135"/>
    </location>
</feature>
<feature type="glycosylation site" description="N-linked (GlcNAc...) asparagine" evidence="2">
    <location>
        <position position="146"/>
    </location>
</feature>
<feature type="glycosylation site" description="N-linked (GlcNAc...) asparagine" evidence="2">
    <location>
        <position position="154"/>
    </location>
</feature>
<feature type="glycosylation site" description="N-linked (GlcNAc...) asparagine" evidence="2">
    <location>
        <position position="177"/>
    </location>
</feature>
<feature type="glycosylation site" description="N-linked (GlcNAc...) asparagine" evidence="2">
    <location>
        <position position="192"/>
    </location>
</feature>
<feature type="glycosylation site" description="N-linked (GlcNAc...) asparagine" evidence="2">
    <location>
        <position position="213"/>
    </location>
</feature>
<feature type="disulfide bond" evidence="3 9">
    <location>
        <begin position="40"/>
        <end position="110"/>
    </location>
</feature>
<feature type="disulfide bond" evidence="3">
    <location>
        <begin position="157"/>
        <end position="218"/>
    </location>
</feature>
<feature type="splice variant" id="VSP_047220" description="In isoform 6." evidence="24">
    <location>
        <begin position="1"/>
        <end position="82"/>
    </location>
</feature>
<feature type="splice variant" id="VSP_023124" description="In isoform 2, isoform 3 and isoform 4." evidence="20 22 23">
    <location>
        <begin position="1"/>
        <end position="6"/>
    </location>
</feature>
<feature type="splice variant" id="VSP_009125" description="In isoform 3." evidence="20">
    <location>
        <begin position="22"/>
        <end position="234"/>
    </location>
</feature>
<feature type="splice variant" id="VSP_047221" description="In isoform 5." evidence="21">
    <location>
        <begin position="22"/>
        <end position="133"/>
    </location>
</feature>
<feature type="splice variant" id="VSP_040324" description="In isoform 4." evidence="20">
    <location>
        <begin position="235"/>
        <end position="282"/>
    </location>
</feature>
<feature type="sequence variant" id="VAR_021916" description="In dbSNP:rs9282642.">
    <original>S</original>
    <variation>N</variation>
    <location>
        <position position="170"/>
    </location>
</feature>
<feature type="sequence variant" id="VAR_055003" description="In dbSNP:rs2681417." evidence="5 10 11 15 16 17 18 19">
    <original>V</original>
    <variation>I</variation>
    <location>
        <position position="185"/>
    </location>
</feature>
<feature type="sequence variant" id="VAR_014650" description="In dbSNP:rs1129055." evidence="10 11">
    <original>A</original>
    <variation>T</variation>
    <location>
        <position position="310"/>
    </location>
</feature>
<feature type="sequence variant" id="VAR_021917" description="In dbSNP:rs9282648.">
    <original>D</original>
    <variation>N</variation>
    <location>
        <position position="323"/>
    </location>
</feature>
<feature type="sequence conflict" description="In Ref. 9; AAA86473." evidence="24" ref="9">
    <original>K</original>
    <variation>E</variation>
    <location>
        <position position="27"/>
    </location>
</feature>
<feature type="strand" evidence="25">
    <location>
        <begin position="26"/>
        <end position="31"/>
    </location>
</feature>
<feature type="strand" evidence="25">
    <location>
        <begin position="36"/>
        <end position="39"/>
    </location>
</feature>
<feature type="helix" evidence="25">
    <location>
        <begin position="50"/>
        <end position="52"/>
    </location>
</feature>
<feature type="strand" evidence="25">
    <location>
        <begin position="53"/>
        <end position="59"/>
    </location>
</feature>
<feature type="strand" evidence="25">
    <location>
        <begin position="64"/>
        <end position="69"/>
    </location>
</feature>
<feature type="strand" evidence="25">
    <location>
        <begin position="72"/>
        <end position="74"/>
    </location>
</feature>
<feature type="strand" evidence="25">
    <location>
        <begin position="76"/>
        <end position="78"/>
    </location>
</feature>
<feature type="helix" evidence="25">
    <location>
        <begin position="80"/>
        <end position="82"/>
    </location>
</feature>
<feature type="strand" evidence="25">
    <location>
        <begin position="85"/>
        <end position="89"/>
    </location>
</feature>
<feature type="turn" evidence="25">
    <location>
        <begin position="90"/>
        <end position="93"/>
    </location>
</feature>
<feature type="strand" evidence="25">
    <location>
        <begin position="94"/>
        <end position="97"/>
    </location>
</feature>
<feature type="helix" evidence="25">
    <location>
        <begin position="102"/>
        <end position="104"/>
    </location>
</feature>
<feature type="strand" evidence="25">
    <location>
        <begin position="106"/>
        <end position="115"/>
    </location>
</feature>
<feature type="strand" evidence="25">
    <location>
        <begin position="117"/>
        <end position="133"/>
    </location>
</feature>
<reference key="1">
    <citation type="journal article" date="1993" name="Nature">
        <title>B70 antigen is a second ligand for CTLA-4 and CD28.</title>
        <authorList>
            <person name="Azuma M."/>
            <person name="Ito D."/>
            <person name="Yagita K."/>
            <person name="Okumura K."/>
            <person name="Phillips J.H."/>
            <person name="Lanier L.L."/>
            <person name="Somoza C."/>
        </authorList>
    </citation>
    <scope>NUCLEOTIDE SEQUENCE [MRNA] (ISOFORM 2)</scope>
    <scope>VARIANT ILE-185</scope>
</reference>
<reference key="2">
    <citation type="journal article" date="1993" name="Science">
        <title>Cloning of B7-2: a CTLA-4 counter-receptor that costimulates human T cell proliferation.</title>
        <authorList>
            <person name="Freeman G.J."/>
            <person name="Gribben J.G."/>
            <person name="Boussiotis V.A."/>
            <person name="Ng J.W."/>
            <person name="Restivo V.A. Jr."/>
            <person name="Lombard L.A."/>
            <person name="Gray G.S."/>
            <person name="Nadler L.M."/>
        </authorList>
    </citation>
    <scope>NUCLEOTIDE SEQUENCE [MRNA] (ISOFORM 1)</scope>
    <scope>VARIANT ILE-185</scope>
</reference>
<reference key="3">
    <citation type="journal article" date="2001" name="Biochem. Biophys. Res. Commun.">
        <title>Identification of an alternatively spliced variant of human CD86 mRNA.</title>
        <authorList>
            <person name="Magistrelli G."/>
            <person name="Caron G."/>
            <person name="Gauchat J.-F."/>
            <person name="Jeannin P."/>
            <person name="Bonnefoy J.-Y."/>
            <person name="Delneste Y."/>
        </authorList>
    </citation>
    <scope>NUCLEOTIDE SEQUENCE [MRNA] (ISOFORMS 3 AND 4)</scope>
    <scope>VARIANT ILE-185</scope>
</reference>
<reference key="4">
    <citation type="submission" date="2004-06" db="EMBL/GenBank/DDBJ databases">
        <title>Cloning of human full open reading frames in Gateway(TM) system entry vector (pDONR201).</title>
        <authorList>
            <person name="Halleck A."/>
            <person name="Ebert L."/>
            <person name="Mkoundinya M."/>
            <person name="Schick M."/>
            <person name="Eisenstein S."/>
            <person name="Neubert P."/>
            <person name="Kstrang K."/>
            <person name="Schatten R."/>
            <person name="Shen B."/>
            <person name="Henze S."/>
            <person name="Mar W."/>
            <person name="Korn B."/>
            <person name="Zuo D."/>
            <person name="Hu Y."/>
            <person name="LaBaer J."/>
        </authorList>
    </citation>
    <scope>NUCLEOTIDE SEQUENCE [LARGE SCALE MRNA] (ISOFORM 2)</scope>
    <scope>VARIANT ILE-185</scope>
</reference>
<reference key="5">
    <citation type="submission" date="2006-10" db="EMBL/GenBank/DDBJ databases">
        <authorList>
            <person name="Livingston R.J."/>
            <person name="Shaffer T."/>
            <person name="McFarland I."/>
            <person name="Nguyen C.P."/>
            <person name="Stanaway I.B."/>
            <person name="Rajkumar N."/>
            <person name="Johnson E.J."/>
            <person name="da Ponte S.H."/>
            <person name="Willa H."/>
            <person name="Ahearn M.O."/>
            <person name="Bertucci C."/>
            <person name="Acklestad J."/>
            <person name="Carroll A."/>
            <person name="Swanson J."/>
            <person name="Gildersleeve H.I."/>
            <person name="Nickerson D.A."/>
        </authorList>
    </citation>
    <scope>NUCLEOTIDE SEQUENCE [GENOMIC DNA]</scope>
    <scope>VARIANT ILE-185</scope>
</reference>
<reference key="6">
    <citation type="journal article" date="2004" name="Nat. Genet.">
        <title>Complete sequencing and characterization of 21,243 full-length human cDNAs.</title>
        <authorList>
            <person name="Ota T."/>
            <person name="Suzuki Y."/>
            <person name="Nishikawa T."/>
            <person name="Otsuki T."/>
            <person name="Sugiyama T."/>
            <person name="Irie R."/>
            <person name="Wakamatsu A."/>
            <person name="Hayashi K."/>
            <person name="Sato H."/>
            <person name="Nagai K."/>
            <person name="Kimura K."/>
            <person name="Makita H."/>
            <person name="Sekine M."/>
            <person name="Obayashi M."/>
            <person name="Nishi T."/>
            <person name="Shibahara T."/>
            <person name="Tanaka T."/>
            <person name="Ishii S."/>
            <person name="Yamamoto J."/>
            <person name="Saito K."/>
            <person name="Kawai Y."/>
            <person name="Isono Y."/>
            <person name="Nakamura Y."/>
            <person name="Nagahari K."/>
            <person name="Murakami K."/>
            <person name="Yasuda T."/>
            <person name="Iwayanagi T."/>
            <person name="Wagatsuma M."/>
            <person name="Shiratori A."/>
            <person name="Sudo H."/>
            <person name="Hosoiri T."/>
            <person name="Kaku Y."/>
            <person name="Kodaira H."/>
            <person name="Kondo H."/>
            <person name="Sugawara M."/>
            <person name="Takahashi M."/>
            <person name="Kanda K."/>
            <person name="Yokoi T."/>
            <person name="Furuya T."/>
            <person name="Kikkawa E."/>
            <person name="Omura Y."/>
            <person name="Abe K."/>
            <person name="Kamihara K."/>
            <person name="Katsuta N."/>
            <person name="Sato K."/>
            <person name="Tanikawa M."/>
            <person name="Yamazaki M."/>
            <person name="Ninomiya K."/>
            <person name="Ishibashi T."/>
            <person name="Yamashita H."/>
            <person name="Murakawa K."/>
            <person name="Fujimori K."/>
            <person name="Tanai H."/>
            <person name="Kimata M."/>
            <person name="Watanabe M."/>
            <person name="Hiraoka S."/>
            <person name="Chiba Y."/>
            <person name="Ishida S."/>
            <person name="Ono Y."/>
            <person name="Takiguchi S."/>
            <person name="Watanabe S."/>
            <person name="Yosida M."/>
            <person name="Hotuta T."/>
            <person name="Kusano J."/>
            <person name="Kanehori K."/>
            <person name="Takahashi-Fujii A."/>
            <person name="Hara H."/>
            <person name="Tanase T.-O."/>
            <person name="Nomura Y."/>
            <person name="Togiya S."/>
            <person name="Komai F."/>
            <person name="Hara R."/>
            <person name="Takeuchi K."/>
            <person name="Arita M."/>
            <person name="Imose N."/>
            <person name="Musashino K."/>
            <person name="Yuuki H."/>
            <person name="Oshima A."/>
            <person name="Sasaki N."/>
            <person name="Aotsuka S."/>
            <person name="Yoshikawa Y."/>
            <person name="Matsunawa H."/>
            <person name="Ichihara T."/>
            <person name="Shiohata N."/>
            <person name="Sano S."/>
            <person name="Moriya S."/>
            <person name="Momiyama H."/>
            <person name="Satoh N."/>
            <person name="Takami S."/>
            <person name="Terashima Y."/>
            <person name="Suzuki O."/>
            <person name="Nakagawa S."/>
            <person name="Senoh A."/>
            <person name="Mizoguchi H."/>
            <person name="Goto Y."/>
            <person name="Shimizu F."/>
            <person name="Wakebe H."/>
            <person name="Hishigaki H."/>
            <person name="Watanabe T."/>
            <person name="Sugiyama A."/>
            <person name="Takemoto M."/>
            <person name="Kawakami B."/>
            <person name="Yamazaki M."/>
            <person name="Watanabe K."/>
            <person name="Kumagai A."/>
            <person name="Itakura S."/>
            <person name="Fukuzumi Y."/>
            <person name="Fujimori Y."/>
            <person name="Komiyama M."/>
            <person name="Tashiro H."/>
            <person name="Tanigami A."/>
            <person name="Fujiwara T."/>
            <person name="Ono T."/>
            <person name="Yamada K."/>
            <person name="Fujii Y."/>
            <person name="Ozaki K."/>
            <person name="Hirao M."/>
            <person name="Ohmori Y."/>
            <person name="Kawabata A."/>
            <person name="Hikiji T."/>
            <person name="Kobatake N."/>
            <person name="Inagaki H."/>
            <person name="Ikema Y."/>
            <person name="Okamoto S."/>
            <person name="Okitani R."/>
            <person name="Kawakami T."/>
            <person name="Noguchi S."/>
            <person name="Itoh T."/>
            <person name="Shigeta K."/>
            <person name="Senba T."/>
            <person name="Matsumura K."/>
            <person name="Nakajima Y."/>
            <person name="Mizuno T."/>
            <person name="Morinaga M."/>
            <person name="Sasaki M."/>
            <person name="Togashi T."/>
            <person name="Oyama M."/>
            <person name="Hata H."/>
            <person name="Watanabe M."/>
            <person name="Komatsu T."/>
            <person name="Mizushima-Sugano J."/>
            <person name="Satoh T."/>
            <person name="Shirai Y."/>
            <person name="Takahashi Y."/>
            <person name="Nakagawa K."/>
            <person name="Okumura K."/>
            <person name="Nagase T."/>
            <person name="Nomura N."/>
            <person name="Kikuchi H."/>
            <person name="Masuho Y."/>
            <person name="Yamashita R."/>
            <person name="Nakai K."/>
            <person name="Yada T."/>
            <person name="Nakamura Y."/>
            <person name="Ohara O."/>
            <person name="Isogai T."/>
            <person name="Sugano S."/>
        </authorList>
    </citation>
    <scope>NUCLEOTIDE SEQUENCE [LARGE SCALE MRNA] (ISOFORM 5)</scope>
    <scope>VARIANTS ILE-185 AND THR-310</scope>
    <source>
        <tissue>Brain</tissue>
    </source>
</reference>
<reference key="7">
    <citation type="journal article" date="2006" name="Nature">
        <title>The DNA sequence, annotation and analysis of human chromosome 3.</title>
        <authorList>
            <person name="Muzny D.M."/>
            <person name="Scherer S.E."/>
            <person name="Kaul R."/>
            <person name="Wang J."/>
            <person name="Yu J."/>
            <person name="Sudbrak R."/>
            <person name="Buhay C.J."/>
            <person name="Chen R."/>
            <person name="Cree A."/>
            <person name="Ding Y."/>
            <person name="Dugan-Rocha S."/>
            <person name="Gill R."/>
            <person name="Gunaratne P."/>
            <person name="Harris R.A."/>
            <person name="Hawes A.C."/>
            <person name="Hernandez J."/>
            <person name="Hodgson A.V."/>
            <person name="Hume J."/>
            <person name="Jackson A."/>
            <person name="Khan Z.M."/>
            <person name="Kovar-Smith C."/>
            <person name="Lewis L.R."/>
            <person name="Lozado R.J."/>
            <person name="Metzker M.L."/>
            <person name="Milosavljevic A."/>
            <person name="Miner G.R."/>
            <person name="Morgan M.B."/>
            <person name="Nazareth L.V."/>
            <person name="Scott G."/>
            <person name="Sodergren E."/>
            <person name="Song X.-Z."/>
            <person name="Steffen D."/>
            <person name="Wei S."/>
            <person name="Wheeler D.A."/>
            <person name="Wright M.W."/>
            <person name="Worley K.C."/>
            <person name="Yuan Y."/>
            <person name="Zhang Z."/>
            <person name="Adams C.Q."/>
            <person name="Ansari-Lari M.A."/>
            <person name="Ayele M."/>
            <person name="Brown M.J."/>
            <person name="Chen G."/>
            <person name="Chen Z."/>
            <person name="Clendenning J."/>
            <person name="Clerc-Blankenburg K.P."/>
            <person name="Chen R."/>
            <person name="Chen Z."/>
            <person name="Davis C."/>
            <person name="Delgado O."/>
            <person name="Dinh H.H."/>
            <person name="Dong W."/>
            <person name="Draper H."/>
            <person name="Ernst S."/>
            <person name="Fu G."/>
            <person name="Gonzalez-Garay M.L."/>
            <person name="Garcia D.K."/>
            <person name="Gillett W."/>
            <person name="Gu J."/>
            <person name="Hao B."/>
            <person name="Haugen E."/>
            <person name="Havlak P."/>
            <person name="He X."/>
            <person name="Hennig S."/>
            <person name="Hu S."/>
            <person name="Huang W."/>
            <person name="Jackson L.R."/>
            <person name="Jacob L.S."/>
            <person name="Kelly S.H."/>
            <person name="Kube M."/>
            <person name="Levy R."/>
            <person name="Li Z."/>
            <person name="Liu B."/>
            <person name="Liu J."/>
            <person name="Liu W."/>
            <person name="Lu J."/>
            <person name="Maheshwari M."/>
            <person name="Nguyen B.-V."/>
            <person name="Okwuonu G.O."/>
            <person name="Palmeiri A."/>
            <person name="Pasternak S."/>
            <person name="Perez L.M."/>
            <person name="Phelps K.A."/>
            <person name="Plopper F.J."/>
            <person name="Qiang B."/>
            <person name="Raymond C."/>
            <person name="Rodriguez R."/>
            <person name="Saenphimmachak C."/>
            <person name="Santibanez J."/>
            <person name="Shen H."/>
            <person name="Shen Y."/>
            <person name="Subramanian S."/>
            <person name="Tabor P.E."/>
            <person name="Verduzco D."/>
            <person name="Waldron L."/>
            <person name="Wang J."/>
            <person name="Wang J."/>
            <person name="Wang Q."/>
            <person name="Williams G.A."/>
            <person name="Wong G.K.-S."/>
            <person name="Yao Z."/>
            <person name="Zhang J."/>
            <person name="Zhang X."/>
            <person name="Zhao G."/>
            <person name="Zhou J."/>
            <person name="Zhou Y."/>
            <person name="Nelson D."/>
            <person name="Lehrach H."/>
            <person name="Reinhardt R."/>
            <person name="Naylor S.L."/>
            <person name="Yang H."/>
            <person name="Olson M."/>
            <person name="Weinstock G."/>
            <person name="Gibbs R.A."/>
        </authorList>
    </citation>
    <scope>NUCLEOTIDE SEQUENCE [LARGE SCALE GENOMIC DNA]</scope>
</reference>
<reference key="8">
    <citation type="journal article" date="2004" name="Genome Res.">
        <title>The status, quality, and expansion of the NIH full-length cDNA project: the Mammalian Gene Collection (MGC).</title>
        <authorList>
            <consortium name="The MGC Project Team"/>
        </authorList>
    </citation>
    <scope>NUCLEOTIDE SEQUENCE [LARGE SCALE MRNA] (ISOFORM 1)</scope>
    <scope>VARIANTS ILE-185 AND THR-310</scope>
    <source>
        <tissue>Brain</tissue>
    </source>
</reference>
<reference key="9">
    <citation type="journal article" date="1995" name="Immunogenetics">
        <title>Genomic organization of the gene coding for the costimulatory human B-lymphocyte antigen B7-2 (CD86).</title>
        <authorList>
            <person name="Jellis C.L."/>
            <person name="Wang S.S."/>
            <person name="Rennert P."/>
            <person name="Borriello F."/>
            <person name="Sharpe A.H."/>
            <person name="Green N.R."/>
            <person name="Gray G.S."/>
        </authorList>
    </citation>
    <scope>NUCLEOTIDE SEQUENCE [GENOMIC DNA] OF 7-329</scope>
    <scope>VARIANT ILE-185</scope>
    <source>
        <tissue>Foreskin</tissue>
    </source>
</reference>
<reference key="10">
    <citation type="journal article" date="1995" name="J. Immunol.">
        <title>CD80 (B7) and CD86 (B70) provide similar costimulatory signals for T cell proliferation, cytokine production, and generation of CTL.</title>
        <authorList>
            <person name="Lanier L.L."/>
            <person name="O'Fallon S."/>
            <person name="Somoza C."/>
            <person name="Phillips J.H."/>
            <person name="Linsley P.S."/>
            <person name="Okumura K."/>
            <person name="Ito D."/>
            <person name="Azuma M."/>
        </authorList>
    </citation>
    <scope>CHARACTERIZATION</scope>
</reference>
<reference key="11">
    <citation type="journal article" date="1994" name="Blood">
        <title>The B7-2 (B70) costimulatory molecule expressed by monocytes and activated B lymphocytes is the CD86 differentiation antigen.</title>
        <authorList>
            <person name="Engel P."/>
            <person name="Gribben J.G."/>
            <person name="Freeman G.J."/>
            <person name="Zhou L.J."/>
            <person name="Nozawa Y."/>
            <person name="Abe M."/>
            <person name="Nadler L.M."/>
            <person name="Wakasa H."/>
            <person name="Tedder T.F."/>
        </authorList>
    </citation>
    <scope>IDENTIFICATION AS CD86</scope>
</reference>
<reference key="12">
    <citation type="journal article" date="2002" name="Immunity">
        <title>The interaction properties of costimulatory molecules revisited.</title>
        <authorList>
            <person name="Collins A.V."/>
            <person name="Brodie D.W."/>
            <person name="Gilbert R.J."/>
            <person name="Iaboni A."/>
            <person name="Manso-Sancho R."/>
            <person name="Walse B."/>
            <person name="Stuart D.I."/>
            <person name="van der Merwe P.A."/>
            <person name="Davis S.J."/>
        </authorList>
    </citation>
    <scope>INTERACTION WITH CD28</scope>
    <scope>FUNCTION</scope>
</reference>
<reference key="13">
    <citation type="journal article" date="2003" name="J. Biol. Chem.">
        <title>c-MIR, a human E3 ubiquitin ligase, is a functional homolog of herpesvirus proteins MIR1 and MIR2 and has similar activity.</title>
        <authorList>
            <person name="Goto E."/>
            <person name="Ishido S."/>
            <person name="Sato Y."/>
            <person name="Ohgimoto S."/>
            <person name="Ohgimoto K."/>
            <person name="Nagano-Fujii M."/>
            <person name="Hotta H."/>
        </authorList>
    </citation>
    <scope>UBIQUITINATION</scope>
    <scope>INTERACTION WITH MARCH8</scope>
</reference>
<reference key="14">
    <citation type="journal article" date="2006" name="Virus Res.">
        <title>Members of adenovirus species B utilize CD80 and CD86 as cellular attachment receptors.</title>
        <authorList>
            <person name="Short J.J."/>
            <person name="Vasu C."/>
            <person name="Holterman M.J."/>
            <person name="Curiel D.T."/>
            <person name="Pereboev A."/>
        </authorList>
    </citation>
    <scope>FUNCTION (MICROBIAL INFECTION)</scope>
    <scope>INTERACTION WITH ADENOVIRUS SUBGROUP B FIBER PROTEINS</scope>
</reference>
<reference key="15">
    <citation type="journal article" date="2019" name="J. Virol.">
        <title>By Binding CD80 and CD86, the Vaccinia Virus M2 Protein Blocks Their Interactions with both CD28 and CTLA4 and Potentiates CD80 Binding to PD-L1.</title>
        <authorList>
            <person name="Kleinpeter P."/>
            <person name="Remy-Ziller C."/>
            <person name="Winter E."/>
            <person name="Gantzer M."/>
            <person name="Nourtier V."/>
            <person name="Kempf J."/>
            <person name="Hortelano J."/>
            <person name="Schmitt D."/>
            <person name="Schultz H."/>
            <person name="Geist M."/>
            <person name="Brua C."/>
            <person name="Hoffmann C."/>
            <person name="Schlesinger Y."/>
            <person name="Villeval D."/>
            <person name="Thioudellet C."/>
            <person name="Erbs P."/>
            <person name="Foloppe J."/>
            <person name="Silvestre N."/>
            <person name="Fend L."/>
            <person name="Quemeneur E."/>
            <person name="Marchand J.B."/>
        </authorList>
    </citation>
    <scope>FUNCTION (MICROBIAL INFECTION)</scope>
    <scope>INTERACTION WITH VACCINIA VIRUS OPG038/M2 PROTEIN</scope>
</reference>
<reference key="16">
    <citation type="journal article" date="2001" name="Nature">
        <title>Structural basis for co-stimulation by the human CTLA-4/B7-2 complex.</title>
        <authorList>
            <person name="Schwartz J.C."/>
            <person name="Zhang X."/>
            <person name="Fedorov A.A."/>
            <person name="Nathenson S.G."/>
            <person name="Almo S.C."/>
        </authorList>
    </citation>
    <scope>X-RAY CRYSTALLOGRAPHY (3.2 ANGSTROMS) OF 26-134 IN COMPLEX WITH CTLA4</scope>
</reference>
<reference key="17">
    <citation type="journal article" date="2003" name="Proc. Natl. Acad. Sci. U.S.A.">
        <title>Crystal structure of the receptor-binding domain of human B7-2: insights into organization and signaling.</title>
        <authorList>
            <person name="Zhang X."/>
            <person name="Schwartz J.C."/>
            <person name="Almo S.C."/>
            <person name="Nathenson S.G."/>
        </authorList>
    </citation>
    <scope>X-RAY CRYSTALLOGRAPHY (2.7 ANGSTROMS) OF 26-134</scope>
    <scope>SUBUNIT</scope>
    <scope>DISULFIDE BOND</scope>
</reference>
<name>CD86_HUMAN</name>
<dbReference type="EMBL" id="U04343">
    <property type="protein sequence ID" value="AAB03814.1"/>
    <property type="molecule type" value="mRNA"/>
</dbReference>
<dbReference type="EMBL" id="L25259">
    <property type="protein sequence ID" value="AAA58389.1"/>
    <property type="molecule type" value="mRNA"/>
</dbReference>
<dbReference type="EMBL" id="CR541844">
    <property type="protein sequence ID" value="CAG46642.1"/>
    <property type="molecule type" value="mRNA"/>
</dbReference>
<dbReference type="EMBL" id="EF064748">
    <property type="protein sequence ID" value="ABK41931.1"/>
    <property type="molecule type" value="Genomic_DNA"/>
</dbReference>
<dbReference type="EMBL" id="AK294663">
    <property type="protein sequence ID" value="BAH11839.1"/>
    <property type="molecule type" value="mRNA"/>
</dbReference>
<dbReference type="EMBL" id="AK301237">
    <property type="protein sequence ID" value="BAH13438.1"/>
    <property type="molecule type" value="mRNA"/>
</dbReference>
<dbReference type="EMBL" id="AK316203">
    <property type="protein sequence ID" value="BAH14574.1"/>
    <property type="molecule type" value="mRNA"/>
</dbReference>
<dbReference type="EMBL" id="AC068630">
    <property type="status" value="NOT_ANNOTATED_CDS"/>
    <property type="molecule type" value="Genomic_DNA"/>
</dbReference>
<dbReference type="EMBL" id="BC040261">
    <property type="protein sequence ID" value="AAH40261.1"/>
    <property type="molecule type" value="mRNA"/>
</dbReference>
<dbReference type="EMBL" id="U17722">
    <property type="protein sequence ID" value="AAA86473.1"/>
    <property type="molecule type" value="Genomic_DNA"/>
</dbReference>
<dbReference type="EMBL" id="U17717">
    <property type="protein sequence ID" value="AAA86473.1"/>
    <property type="status" value="JOINED"/>
    <property type="molecule type" value="Genomic_DNA"/>
</dbReference>
<dbReference type="EMBL" id="U17718">
    <property type="protein sequence ID" value="AAA86473.1"/>
    <property type="status" value="JOINED"/>
    <property type="molecule type" value="Genomic_DNA"/>
</dbReference>
<dbReference type="EMBL" id="U17719">
    <property type="protein sequence ID" value="AAA86473.1"/>
    <property type="status" value="JOINED"/>
    <property type="molecule type" value="Genomic_DNA"/>
</dbReference>
<dbReference type="EMBL" id="U17721">
    <property type="protein sequence ID" value="AAA86473.1"/>
    <property type="status" value="JOINED"/>
    <property type="molecule type" value="Genomic_DNA"/>
</dbReference>
<dbReference type="CCDS" id="CCDS3009.1">
    <molecule id="P42081-1"/>
</dbReference>
<dbReference type="CCDS" id="CCDS43138.1">
    <molecule id="P42081-3"/>
</dbReference>
<dbReference type="CCDS" id="CCDS56272.1">
    <molecule id="P42081-5"/>
</dbReference>
<dbReference type="CCDS" id="CCDS56273.1">
    <molecule id="P42081-6"/>
</dbReference>
<dbReference type="CCDS" id="CCDS74991.1">
    <molecule id="P42081-4"/>
</dbReference>
<dbReference type="PIR" id="A48754">
    <property type="entry name" value="A48754"/>
</dbReference>
<dbReference type="PIR" id="JC7605">
    <property type="entry name" value="JC7605"/>
</dbReference>
<dbReference type="RefSeq" id="NP_001193853.2">
    <molecule id="P42081-5"/>
    <property type="nucleotide sequence ID" value="NM_001206924.2"/>
</dbReference>
<dbReference type="RefSeq" id="NP_001193854.2">
    <molecule id="P42081-6"/>
    <property type="nucleotide sequence ID" value="NM_001206925.2"/>
</dbReference>
<dbReference type="RefSeq" id="NP_008820.4">
    <molecule id="P42081-3"/>
    <property type="nucleotide sequence ID" value="NM_006889.5"/>
</dbReference>
<dbReference type="RefSeq" id="NP_787058.4">
    <molecule id="P42081-1"/>
    <property type="nucleotide sequence ID" value="NM_175862.4"/>
</dbReference>
<dbReference type="RefSeq" id="NP_795711.2">
    <molecule id="P42081-4"/>
    <property type="nucleotide sequence ID" value="NM_176892.2"/>
</dbReference>
<dbReference type="PDB" id="1I85">
    <property type="method" value="X-ray"/>
    <property type="resolution" value="3.20 A"/>
    <property type="chains" value="A/B=26-134"/>
</dbReference>
<dbReference type="PDB" id="1NCN">
    <property type="method" value="X-ray"/>
    <property type="resolution" value="2.70 A"/>
    <property type="chains" value="A/B=26-134"/>
</dbReference>
<dbReference type="PDB" id="5YXK">
    <property type="method" value="X-ray"/>
    <property type="resolution" value="1.90 A"/>
    <property type="chains" value="A/B/C/D=26-134"/>
</dbReference>
<dbReference type="PDB" id="8FXX">
    <property type="method" value="EM"/>
    <property type="resolution" value="3.26 A"/>
    <property type="chains" value="C/E/G/H/J/L/N=26-134"/>
</dbReference>
<dbReference type="PDB" id="8FXY">
    <property type="method" value="EM"/>
    <property type="resolution" value="3.34 A"/>
    <property type="chains" value="C/E/G/H/J/L=26-243"/>
</dbReference>
<dbReference type="PDB" id="8HXB">
    <property type="method" value="EM"/>
    <property type="resolution" value="2.70 A"/>
    <property type="chains" value="G/H/I/J/K/L=26-238"/>
</dbReference>
<dbReference type="PDB" id="8HXC">
    <property type="method" value="EM"/>
    <property type="resolution" value="3.12 A"/>
    <property type="chains" value="H/I/J/K/L/M/N=26-238"/>
</dbReference>
<dbReference type="PDBsum" id="1I85"/>
<dbReference type="PDBsum" id="1NCN"/>
<dbReference type="PDBsum" id="5YXK"/>
<dbReference type="PDBsum" id="8FXX"/>
<dbReference type="PDBsum" id="8FXY"/>
<dbReference type="PDBsum" id="8HXB"/>
<dbReference type="PDBsum" id="8HXC"/>
<dbReference type="EMDB" id="EMD-29547"/>
<dbReference type="EMDB" id="EMD-29548"/>
<dbReference type="EMDB" id="EMD-35075"/>
<dbReference type="EMDB" id="EMD-35076"/>
<dbReference type="SMR" id="P42081"/>
<dbReference type="BioGRID" id="107380">
    <property type="interactions" value="7"/>
</dbReference>
<dbReference type="DIP" id="DIP-35606N"/>
<dbReference type="FunCoup" id="P42081">
    <property type="interactions" value="587"/>
</dbReference>
<dbReference type="IntAct" id="P42081">
    <property type="interactions" value="8"/>
</dbReference>
<dbReference type="STRING" id="9606.ENSP00000332049"/>
<dbReference type="ChEMBL" id="CHEMBL2364156"/>
<dbReference type="DrugBank" id="DB01281">
    <property type="generic name" value="Abatacept"/>
</dbReference>
<dbReference type="DrugBank" id="DB00098">
    <property type="generic name" value="Antithymocyte immunoglobulin (rabbit)"/>
</dbReference>
<dbReference type="DrugBank" id="DB06681">
    <property type="generic name" value="Belatacept"/>
</dbReference>
<dbReference type="DrugBank" id="DB11752">
    <property type="generic name" value="Bryostatin 1"/>
</dbReference>
<dbReference type="DrugCentral" id="P42081"/>
<dbReference type="GuidetoPHARMACOLOGY" id="2745"/>
<dbReference type="GlyCosmos" id="P42081">
    <property type="glycosylation" value="8 sites, No reported glycans"/>
</dbReference>
<dbReference type="GlyGen" id="P42081">
    <property type="glycosylation" value="8 sites"/>
</dbReference>
<dbReference type="iPTMnet" id="P42081"/>
<dbReference type="PhosphoSitePlus" id="P42081"/>
<dbReference type="BioMuta" id="CD86"/>
<dbReference type="DMDM" id="317373339"/>
<dbReference type="MassIVE" id="P42081"/>
<dbReference type="PaxDb" id="9606-ENSP00000332049"/>
<dbReference type="PeptideAtlas" id="P42081"/>
<dbReference type="ProteomicsDB" id="18249"/>
<dbReference type="ProteomicsDB" id="19349"/>
<dbReference type="ProteomicsDB" id="55481">
    <molecule id="P42081-1"/>
</dbReference>
<dbReference type="ProteomicsDB" id="55482">
    <molecule id="P42081-2"/>
</dbReference>
<dbReference type="ProteomicsDB" id="55483">
    <molecule id="P42081-3"/>
</dbReference>
<dbReference type="ProteomicsDB" id="55484">
    <molecule id="P42081-4"/>
</dbReference>
<dbReference type="ABCD" id="P42081">
    <property type="antibodies" value="17 sequenced antibodies"/>
</dbReference>
<dbReference type="Antibodypedia" id="3810">
    <property type="antibodies" value="2295 antibodies from 51 providers"/>
</dbReference>
<dbReference type="CPTC" id="P42081">
    <property type="antibodies" value="1 antibody"/>
</dbReference>
<dbReference type="DNASU" id="942"/>
<dbReference type="Ensembl" id="ENST00000264468.9">
    <molecule id="P42081-4"/>
    <property type="protein sequence ID" value="ENSP00000264468.6"/>
    <property type="gene ID" value="ENSG00000114013.16"/>
</dbReference>
<dbReference type="Ensembl" id="ENST00000330540.7">
    <molecule id="P42081-1"/>
    <property type="protein sequence ID" value="ENSP00000332049.2"/>
    <property type="gene ID" value="ENSG00000114013.16"/>
</dbReference>
<dbReference type="Ensembl" id="ENST00000393627.6">
    <molecule id="P42081-3"/>
    <property type="protein sequence ID" value="ENSP00000377248.2"/>
    <property type="gene ID" value="ENSG00000114013.16"/>
</dbReference>
<dbReference type="Ensembl" id="ENST00000469710.5">
    <molecule id="P42081-6"/>
    <property type="protein sequence ID" value="ENSP00000418988.1"/>
    <property type="gene ID" value="ENSG00000114013.16"/>
</dbReference>
<dbReference type="Ensembl" id="ENST00000493101.5">
    <molecule id="P42081-5"/>
    <property type="protein sequence ID" value="ENSP00000420230.1"/>
    <property type="gene ID" value="ENSG00000114013.16"/>
</dbReference>
<dbReference type="GeneID" id="942"/>
<dbReference type="KEGG" id="hsa:942"/>
<dbReference type="MANE-Select" id="ENST00000330540.7">
    <property type="protein sequence ID" value="ENSP00000332049.2"/>
    <property type="RefSeq nucleotide sequence ID" value="NM_175862.5"/>
    <property type="RefSeq protein sequence ID" value="NP_787058.5"/>
</dbReference>
<dbReference type="UCSC" id="uc003eet.4">
    <molecule id="P42081-1"/>
    <property type="organism name" value="human"/>
</dbReference>
<dbReference type="AGR" id="HGNC:1705"/>
<dbReference type="CTD" id="942"/>
<dbReference type="DisGeNET" id="942"/>
<dbReference type="GeneCards" id="CD86"/>
<dbReference type="HGNC" id="HGNC:1705">
    <property type="gene designation" value="CD86"/>
</dbReference>
<dbReference type="HPA" id="ENSG00000114013">
    <property type="expression patterns" value="Tissue enhanced (lymphoid)"/>
</dbReference>
<dbReference type="MIM" id="601020">
    <property type="type" value="gene"/>
</dbReference>
<dbReference type="neXtProt" id="NX_P42081"/>
<dbReference type="OpenTargets" id="ENSG00000114013"/>
<dbReference type="PharmGKB" id="PA26243"/>
<dbReference type="VEuPathDB" id="HostDB:ENSG00000114013"/>
<dbReference type="eggNOG" id="ENOG502S1FF">
    <property type="taxonomic scope" value="Eukaryota"/>
</dbReference>
<dbReference type="GeneTree" id="ENSGT00940000161500"/>
<dbReference type="HOGENOM" id="CLU_1271925_0_0_1"/>
<dbReference type="InParanoid" id="P42081"/>
<dbReference type="OMA" id="LPCQFTN"/>
<dbReference type="OrthoDB" id="5857426at2759"/>
<dbReference type="PAN-GO" id="P42081">
    <property type="GO annotations" value="7 GO annotations based on evolutionary models"/>
</dbReference>
<dbReference type="PhylomeDB" id="P42081"/>
<dbReference type="TreeFam" id="TF331083"/>
<dbReference type="PathwayCommons" id="P42081"/>
<dbReference type="Reactome" id="R-HSA-1257604">
    <property type="pathway name" value="PIP3 activates AKT signaling"/>
</dbReference>
<dbReference type="Reactome" id="R-HSA-2219530">
    <property type="pathway name" value="Constitutive Signaling by Aberrant PI3K in Cancer"/>
</dbReference>
<dbReference type="Reactome" id="R-HSA-389356">
    <property type="pathway name" value="Co-stimulation by CD28"/>
</dbReference>
<dbReference type="Reactome" id="R-HSA-389357">
    <property type="pathway name" value="CD28 dependent PI3K/Akt signaling"/>
</dbReference>
<dbReference type="Reactome" id="R-HSA-389359">
    <property type="pathway name" value="CD28 dependent Vav1 pathway"/>
</dbReference>
<dbReference type="Reactome" id="R-HSA-389513">
    <property type="pathway name" value="Co-inhibition by CTLA4"/>
</dbReference>
<dbReference type="Reactome" id="R-HSA-6783783">
    <property type="pathway name" value="Interleukin-10 signaling"/>
</dbReference>
<dbReference type="Reactome" id="R-HSA-6811558">
    <property type="pathway name" value="PI5P, PP2A and IER3 Regulate PI3K/AKT Signaling"/>
</dbReference>
<dbReference type="SignaLink" id="P42081"/>
<dbReference type="SIGNOR" id="P42081"/>
<dbReference type="BioGRID-ORCS" id="942">
    <property type="hits" value="71 hits in 1152 CRISPR screens"/>
</dbReference>
<dbReference type="ChiTaRS" id="CD86">
    <property type="organism name" value="human"/>
</dbReference>
<dbReference type="EvolutionaryTrace" id="P42081"/>
<dbReference type="GeneWiki" id="CD86"/>
<dbReference type="GenomeRNAi" id="942"/>
<dbReference type="Pharos" id="P42081">
    <property type="development level" value="Tclin"/>
</dbReference>
<dbReference type="PRO" id="PR:P42081"/>
<dbReference type="Proteomes" id="UP000005640">
    <property type="component" value="Chromosome 3"/>
</dbReference>
<dbReference type="RNAct" id="P42081">
    <property type="molecule type" value="protein"/>
</dbReference>
<dbReference type="Bgee" id="ENSG00000114013">
    <property type="expression patterns" value="Expressed in monocyte and 146 other cell types or tissues"/>
</dbReference>
<dbReference type="ExpressionAtlas" id="P42081">
    <property type="expression patterns" value="baseline and differential"/>
</dbReference>
<dbReference type="GO" id="GO:0009986">
    <property type="term" value="C:cell surface"/>
    <property type="evidence" value="ECO:0007005"/>
    <property type="project" value="UniProtKB"/>
</dbReference>
<dbReference type="GO" id="GO:0034451">
    <property type="term" value="C:centriolar satellite"/>
    <property type="evidence" value="ECO:0000314"/>
    <property type="project" value="HPA"/>
</dbReference>
<dbReference type="GO" id="GO:0009897">
    <property type="term" value="C:external side of plasma membrane"/>
    <property type="evidence" value="ECO:0000318"/>
    <property type="project" value="GO_Central"/>
</dbReference>
<dbReference type="GO" id="GO:0070062">
    <property type="term" value="C:extracellular exosome"/>
    <property type="evidence" value="ECO:0000314"/>
    <property type="project" value="UniProtKB"/>
</dbReference>
<dbReference type="GO" id="GO:0005886">
    <property type="term" value="C:plasma membrane"/>
    <property type="evidence" value="ECO:0000314"/>
    <property type="project" value="HPA"/>
</dbReference>
<dbReference type="GO" id="GO:0015026">
    <property type="term" value="F:coreceptor activity"/>
    <property type="evidence" value="ECO:0000303"/>
    <property type="project" value="UniProtKB"/>
</dbReference>
<dbReference type="GO" id="GO:0048018">
    <property type="term" value="F:receptor ligand activity"/>
    <property type="evidence" value="ECO:0000314"/>
    <property type="project" value="UniProt"/>
</dbReference>
<dbReference type="GO" id="GO:0038023">
    <property type="term" value="F:signaling receptor activity"/>
    <property type="evidence" value="ECO:0000304"/>
    <property type="project" value="ProtInc"/>
</dbReference>
<dbReference type="GO" id="GO:0001618">
    <property type="term" value="F:virus receptor activity"/>
    <property type="evidence" value="ECO:0007669"/>
    <property type="project" value="UniProtKB-KW"/>
</dbReference>
<dbReference type="GO" id="GO:0002250">
    <property type="term" value="P:adaptive immune response"/>
    <property type="evidence" value="ECO:0007669"/>
    <property type="project" value="UniProtKB-KW"/>
</dbReference>
<dbReference type="GO" id="GO:0042113">
    <property type="term" value="P:B cell activation"/>
    <property type="evidence" value="ECO:0000250"/>
    <property type="project" value="UniProtKB"/>
</dbReference>
<dbReference type="GO" id="GO:0007166">
    <property type="term" value="P:cell surface receptor signaling pathway"/>
    <property type="evidence" value="ECO:0000318"/>
    <property type="project" value="GO_Central"/>
</dbReference>
<dbReference type="GO" id="GO:0071222">
    <property type="term" value="P:cellular response to lipopolysaccharide"/>
    <property type="evidence" value="ECO:0000318"/>
    <property type="project" value="GO_Central"/>
</dbReference>
<dbReference type="GO" id="GO:0006955">
    <property type="term" value="P:immune response"/>
    <property type="evidence" value="ECO:0000318"/>
    <property type="project" value="GO_Central"/>
</dbReference>
<dbReference type="GO" id="GO:0042130">
    <property type="term" value="P:negative regulation of T cell proliferation"/>
    <property type="evidence" value="ECO:0000318"/>
    <property type="project" value="GO_Central"/>
</dbReference>
<dbReference type="GO" id="GO:0008284">
    <property type="term" value="P:positive regulation of cell population proliferation"/>
    <property type="evidence" value="ECO:0000304"/>
    <property type="project" value="ProtInc"/>
</dbReference>
<dbReference type="GO" id="GO:0045893">
    <property type="term" value="P:positive regulation of DNA-templated transcription"/>
    <property type="evidence" value="ECO:0000303"/>
    <property type="project" value="UniProtKB"/>
</dbReference>
<dbReference type="GO" id="GO:0002639">
    <property type="term" value="P:positive regulation of immunoglobulin production"/>
    <property type="evidence" value="ECO:0000250"/>
    <property type="project" value="UniProtKB"/>
</dbReference>
<dbReference type="GO" id="GO:0032743">
    <property type="term" value="P:positive regulation of interleukin-2 production"/>
    <property type="evidence" value="ECO:0000303"/>
    <property type="project" value="UniProtKB"/>
</dbReference>
<dbReference type="GO" id="GO:0032753">
    <property type="term" value="P:positive regulation of interleukin-4 production"/>
    <property type="evidence" value="ECO:0000303"/>
    <property type="project" value="UniProtKB"/>
</dbReference>
<dbReference type="GO" id="GO:0032761">
    <property type="term" value="P:positive regulation of lymphotoxin A production"/>
    <property type="evidence" value="ECO:0000303"/>
    <property type="project" value="UniProtKB"/>
</dbReference>
<dbReference type="GO" id="GO:1901224">
    <property type="term" value="P:positive regulation of non-canonical NF-kappaB signal transduction"/>
    <property type="evidence" value="ECO:0000250"/>
    <property type="project" value="UniProtKB"/>
</dbReference>
<dbReference type="GO" id="GO:0042102">
    <property type="term" value="P:positive regulation of T cell proliferation"/>
    <property type="evidence" value="ECO:0000318"/>
    <property type="project" value="GO_Central"/>
</dbReference>
<dbReference type="GO" id="GO:0045630">
    <property type="term" value="P:positive regulation of T-helper 2 cell differentiation"/>
    <property type="evidence" value="ECO:0000303"/>
    <property type="project" value="UniProtKB"/>
</dbReference>
<dbReference type="GO" id="GO:0042110">
    <property type="term" value="P:T cell activation"/>
    <property type="evidence" value="ECO:0000314"/>
    <property type="project" value="UniProt"/>
</dbReference>
<dbReference type="GO" id="GO:0031295">
    <property type="term" value="P:T cell costimulation"/>
    <property type="evidence" value="ECO:0000318"/>
    <property type="project" value="GO_Central"/>
</dbReference>
<dbReference type="CDD" id="cd16087">
    <property type="entry name" value="IgV_CD86"/>
    <property type="match status" value="1"/>
</dbReference>
<dbReference type="FunFam" id="2.60.40.10:FF:000765">
    <property type="entry name" value="CD86 isoform 1"/>
    <property type="match status" value="1"/>
</dbReference>
<dbReference type="FunFam" id="2.60.40.10:FF:000582">
    <property type="entry name" value="T-lymphocyte activation antigen CD86"/>
    <property type="match status" value="1"/>
</dbReference>
<dbReference type="Gene3D" id="2.60.40.10">
    <property type="entry name" value="Immunoglobulins"/>
    <property type="match status" value="2"/>
</dbReference>
<dbReference type="InterPro" id="IPR037677">
    <property type="entry name" value="CD86_IgV"/>
</dbReference>
<dbReference type="InterPro" id="IPR007110">
    <property type="entry name" value="Ig-like_dom"/>
</dbReference>
<dbReference type="InterPro" id="IPR036179">
    <property type="entry name" value="Ig-like_dom_sf"/>
</dbReference>
<dbReference type="InterPro" id="IPR013783">
    <property type="entry name" value="Ig-like_fold"/>
</dbReference>
<dbReference type="InterPro" id="IPR003599">
    <property type="entry name" value="Ig_sub"/>
</dbReference>
<dbReference type="InterPro" id="IPR013106">
    <property type="entry name" value="Ig_V-set"/>
</dbReference>
<dbReference type="InterPro" id="IPR051713">
    <property type="entry name" value="T-cell_Activation_Regulation"/>
</dbReference>
<dbReference type="PANTHER" id="PTHR25466">
    <property type="entry name" value="T-LYMPHOCYTE ACTIVATION ANTIGEN"/>
    <property type="match status" value="1"/>
</dbReference>
<dbReference type="PANTHER" id="PTHR25466:SF2">
    <property type="entry name" value="T-LYMPHOCYTE ACTIVATION ANTIGEN CD86"/>
    <property type="match status" value="1"/>
</dbReference>
<dbReference type="Pfam" id="PF07686">
    <property type="entry name" value="V-set"/>
    <property type="match status" value="1"/>
</dbReference>
<dbReference type="SMART" id="SM00409">
    <property type="entry name" value="IG"/>
    <property type="match status" value="1"/>
</dbReference>
<dbReference type="SMART" id="SM00406">
    <property type="entry name" value="IGv"/>
    <property type="match status" value="1"/>
</dbReference>
<dbReference type="SUPFAM" id="SSF48726">
    <property type="entry name" value="Immunoglobulin"/>
    <property type="match status" value="1"/>
</dbReference>
<dbReference type="PROSITE" id="PS50835">
    <property type="entry name" value="IG_LIKE"/>
    <property type="match status" value="1"/>
</dbReference>
<protein>
    <recommendedName>
        <fullName>T-lymphocyte activation antigen CD86</fullName>
    </recommendedName>
    <alternativeName>
        <fullName>Activation B7-2 antigen</fullName>
    </alternativeName>
    <alternativeName>
        <fullName>B70</fullName>
    </alternativeName>
    <alternativeName>
        <fullName>BU63</fullName>
    </alternativeName>
    <alternativeName>
        <fullName>CTLA-4 counter-receptor B7.2</fullName>
    </alternativeName>
    <alternativeName>
        <fullName>FUN-1</fullName>
    </alternativeName>
    <cdAntigenName>CD86</cdAntigenName>
</protein>
<evidence type="ECO:0000250" key="1">
    <source>
        <dbReference type="UniProtKB" id="P42082"/>
    </source>
</evidence>
<evidence type="ECO:0000255" key="2"/>
<evidence type="ECO:0000255" key="3">
    <source>
        <dbReference type="PROSITE-ProRule" id="PRU00114"/>
    </source>
</evidence>
<evidence type="ECO:0000256" key="4">
    <source>
        <dbReference type="SAM" id="MobiDB-lite"/>
    </source>
</evidence>
<evidence type="ECO:0000269" key="5">
    <source>
    </source>
</evidence>
<evidence type="ECO:0000269" key="6">
    <source>
    </source>
</evidence>
<evidence type="ECO:0000269" key="7">
    <source>
    </source>
</evidence>
<evidence type="ECO:0000269" key="8">
    <source>
    </source>
</evidence>
<evidence type="ECO:0000269" key="9">
    <source>
    </source>
</evidence>
<evidence type="ECO:0000269" key="10">
    <source>
    </source>
</evidence>
<evidence type="ECO:0000269" key="11">
    <source>
    </source>
</evidence>
<evidence type="ECO:0000269" key="12">
    <source>
    </source>
</evidence>
<evidence type="ECO:0000269" key="13">
    <source>
    </source>
</evidence>
<evidence type="ECO:0000269" key="14">
    <source>
    </source>
</evidence>
<evidence type="ECO:0000269" key="15">
    <source>
    </source>
</evidence>
<evidence type="ECO:0000269" key="16">
    <source>
    </source>
</evidence>
<evidence type="ECO:0000269" key="17">
    <source>
    </source>
</evidence>
<evidence type="ECO:0000269" key="18">
    <source ref="4"/>
</evidence>
<evidence type="ECO:0000269" key="19">
    <source ref="5"/>
</evidence>
<evidence type="ECO:0000303" key="20">
    <source>
    </source>
</evidence>
<evidence type="ECO:0000303" key="21">
    <source>
    </source>
</evidence>
<evidence type="ECO:0000303" key="22">
    <source>
    </source>
</evidence>
<evidence type="ECO:0000303" key="23">
    <source ref="4"/>
</evidence>
<evidence type="ECO:0000305" key="24"/>
<evidence type="ECO:0007829" key="25">
    <source>
        <dbReference type="PDB" id="5YXK"/>
    </source>
</evidence>
<gene>
    <name type="primary">CD86</name>
    <name type="synonym">CD28LG2</name>
</gene>
<sequence>MDPQCTMGLSNILFVMAFLLSGAAPLKIQAYFNETADLPCQFANSQNQSLSELVVFWQDQENLVLNEVYLGKEKFDSVHSKYMGRTSFDSDSWTLRLHNLQIKDKGLYQCIIHHKKPTGMIRIHQMNSELSVLANFSQPEIVPISNITENVYINLTCSSIHGYPEPKKMSVLLRTKNSTIEYDGVMQKSQDNVTELYDVSISLSVSFPDVTSNMTIFCILETDKTRLLSSPFSIELEDPQPPPDHIPWITAVLPTVIICVMVFCLILWKWKKKKRPRNSYKCGTNTMEREESEQTKKREKIHIPERSDEAQRVFKSSKTSSCDKSDTCF</sequence>
<proteinExistence type="evidence at protein level"/>
<accession>P42081</accession>
<accession>A0N0P0</accession>
<accession>B7Z2F3</accession>
<accession>B7Z702</accession>
<accession>E7ETN5</accession>
<accession>E9PC27</accession>
<accession>Q13655</accession>
<accession>Q6FHB1</accession>
<accession>Q6GTS4</accession>
<accession>Q7M4L5</accession>
<organism>
    <name type="scientific">Homo sapiens</name>
    <name type="common">Human</name>
    <dbReference type="NCBI Taxonomy" id="9606"/>
    <lineage>
        <taxon>Eukaryota</taxon>
        <taxon>Metazoa</taxon>
        <taxon>Chordata</taxon>
        <taxon>Craniata</taxon>
        <taxon>Vertebrata</taxon>
        <taxon>Euteleostomi</taxon>
        <taxon>Mammalia</taxon>
        <taxon>Eutheria</taxon>
        <taxon>Euarchontoglires</taxon>
        <taxon>Primates</taxon>
        <taxon>Haplorrhini</taxon>
        <taxon>Catarrhini</taxon>
        <taxon>Hominidae</taxon>
        <taxon>Homo</taxon>
    </lineage>
</organism>
<keyword id="KW-0002">3D-structure</keyword>
<keyword id="KW-1064">Adaptive immunity</keyword>
<keyword id="KW-0025">Alternative splicing</keyword>
<keyword id="KW-1003">Cell membrane</keyword>
<keyword id="KW-1015">Disulfide bond</keyword>
<keyword id="KW-0325">Glycoprotein</keyword>
<keyword id="KW-1183">Host cell receptor for virus entry</keyword>
<keyword id="KW-0945">Host-virus interaction</keyword>
<keyword id="KW-0391">Immunity</keyword>
<keyword id="KW-0393">Immunoglobulin domain</keyword>
<keyword id="KW-0472">Membrane</keyword>
<keyword id="KW-1267">Proteomics identification</keyword>
<keyword id="KW-0675">Receptor</keyword>
<keyword id="KW-1185">Reference proteome</keyword>
<keyword id="KW-0732">Signal</keyword>
<keyword id="KW-0812">Transmembrane</keyword>
<keyword id="KW-1133">Transmembrane helix</keyword>
<keyword id="KW-0832">Ubl conjugation</keyword>
<comment type="function">
    <text evidence="1 7 14">Receptor involved in the costimulatory signal essential for T-lymphocyte proliferation and interleukin-2 production, by binding CD28 or CTLA-4 (PubMed:12196291). May play a critical role in the early events of T-cell activation and costimulation of naive T-cells, such as deciding between immunity and anergy that is made by T-cells within 24 hours after activation (PubMed:7527824). Also involved in the regulation of B cells function, plays a role in regulating the level of IgG(1) produced. Upon CD40 engagement, activates NF-kappa-B signaling pathway via phospholipase C and protein kinase C activation (By similarity).</text>
</comment>
<comment type="function">
    <molecule>Isoform 2</molecule>
    <text evidence="14">Interferes with the formation of CD86 clusters, and thus acts as a negative regulator of T-cell activation.</text>
</comment>
<comment type="function">
    <text evidence="12">(Microbial infection) Acts as a receptor for adenovirus subgroup B.</text>
</comment>
<comment type="subunit">
    <text evidence="1 6 7 8 9 24">Homodimer. Interacts with MARCH8. Interacts (via cytoplasmic domain) with PHB1 and PHB2; the interactions increases after priming with CD40 (By similarity). Interacts with CD28 (PubMed:12196291).</text>
</comment>
<comment type="subunit">
    <text evidence="12">(Microbial infection) Interacts with adenovirus subgroup b fiber protein.</text>
</comment>
<comment type="subunit">
    <text evidence="13">(Microbial infection) Interacts with Orthopoxvirus OPG038/M2 protein, inhibiting the interaction with CTLA4 and CD28.</text>
</comment>
<comment type="interaction">
    <interactant intactId="EBI-1030956">
        <id>P42081</id>
    </interactant>
    <interactant intactId="EBI-1030991">
        <id>P16410</id>
        <label>CTLA4</label>
    </interactant>
    <organismsDiffer>false</organismsDiffer>
    <experiments>3</experiments>
</comment>
<comment type="interaction">
    <interactant intactId="EBI-15945259">
        <id>P42081-3</id>
    </interactant>
    <interactant intactId="EBI-1027464">
        <id>P01552</id>
        <label>entB</label>
    </interactant>
    <organismsDiffer>true</organismsDiffer>
    <experiments>5</experiments>
</comment>
<comment type="interaction">
    <interactant intactId="EBI-15945259">
        <id>P42081-3</id>
    </interactant>
    <interactant intactId="EBI-16212640">
        <id>Q99XW1</id>
        <label>smeZ</label>
    </interactant>
    <organismsDiffer>true</organismsDiffer>
    <experiments>2</experiments>
</comment>
<comment type="interaction">
    <interactant intactId="EBI-15945259">
        <id>P42081-3</id>
    </interactant>
    <interactant intactId="EBI-16211350">
        <id>PRO_0000035619</id>
        <label>tst</label>
        <dbReference type="UniProtKB" id="P06886"/>
    </interactant>
    <organismsDiffer>true</organismsDiffer>
    <experiments>2</experiments>
</comment>
<comment type="subcellular location">
    <subcellularLocation>
        <location>Cell membrane</location>
        <topology>Single-pass type I membrane protein</topology>
    </subcellularLocation>
</comment>
<comment type="alternative products">
    <event type="alternative splicing"/>
    <isoform>
        <id>P42081-1</id>
        <name>1</name>
        <sequence type="displayed"/>
    </isoform>
    <isoform>
        <id>P42081-3</id>
        <name>2</name>
        <sequence type="described" ref="VSP_023124"/>
    </isoform>
    <isoform>
        <id>P42081-2</id>
        <name>3</name>
        <name>CD86 deltaEC</name>
        <sequence type="described" ref="VSP_023124 VSP_009125"/>
    </isoform>
    <isoform>
        <id>P42081-4</id>
        <name>4</name>
        <name>CD86 deltaTM</name>
        <sequence type="described" ref="VSP_023124 VSP_040324"/>
    </isoform>
    <isoform>
        <id>P42081-5</id>
        <name>5</name>
        <sequence type="described" ref="VSP_047221"/>
    </isoform>
    <isoform>
        <id>P42081-6</id>
        <name>6</name>
        <sequence type="described" ref="VSP_047220"/>
    </isoform>
</comment>
<comment type="tissue specificity">
    <text>Expressed by activated B-lymphocytes and monocytes.</text>
</comment>
<comment type="PTM">
    <text evidence="8">Polyubiquitinated; which is promoted by MARCH8 and results in endocytosis and lysosomal degradation.</text>
</comment>
<comment type="online information" name="Wikipedia">
    <link uri="https://en.wikipedia.org/wiki/CD86"/>
    <text>CD86 entry</text>
</comment>